<comment type="function">
    <text evidence="1">Catalyzes the dehydration of methylthioribulose-1-phosphate (MTRu-1-P) into 2,3-diketo-5-methylthiopentyl-1-phosphate (DK-MTP-1-P).</text>
</comment>
<comment type="catalytic activity">
    <reaction evidence="1">
        <text>5-(methylsulfanyl)-D-ribulose 1-phosphate = 5-methylsulfanyl-2,3-dioxopentyl phosphate + H2O</text>
        <dbReference type="Rhea" id="RHEA:15549"/>
        <dbReference type="ChEBI" id="CHEBI:15377"/>
        <dbReference type="ChEBI" id="CHEBI:58548"/>
        <dbReference type="ChEBI" id="CHEBI:58828"/>
        <dbReference type="EC" id="4.2.1.109"/>
    </reaction>
</comment>
<comment type="cofactor">
    <cofactor evidence="1">
        <name>Zn(2+)</name>
        <dbReference type="ChEBI" id="CHEBI:29105"/>
    </cofactor>
    <text evidence="1">Binds 1 zinc ion per subunit.</text>
</comment>
<comment type="pathway">
    <text evidence="1">Amino-acid biosynthesis; L-methionine biosynthesis via salvage pathway; L-methionine from S-methyl-5-thio-alpha-D-ribose 1-phosphate: step 2/6.</text>
</comment>
<comment type="similarity">
    <text evidence="1">Belongs to the aldolase class II family. MtnB subfamily.</text>
</comment>
<proteinExistence type="inferred from homology"/>
<sequence length="218" mass="24466">MNATSTPSLPYDTNRLRELAHLLIGTISEFAQAGWTPATSSNFSHRLDEHHVAITVSGRDKRCLREEDIIAVDLDGNAVGHPHTPSAETLLHTQLYRRFPEIGCVLHTHSLTQTVASRVYAGAGHISLKDYELLKAFEGHSTHETTLDVPVFCNTQNMNILAAQVDTLLDKQRMWGYLINGHGMYTWGNTLADARRHLEALEFLLHCELDLLKLRGYL</sequence>
<reference key="1">
    <citation type="journal article" date="2010" name="J. Bacteriol.">
        <title>Whole genome sequences of two Xylella fastidiosa strains (M12 and M23) causing almond leaf scorch disease in California.</title>
        <authorList>
            <person name="Chen J."/>
            <person name="Xie G."/>
            <person name="Han S."/>
            <person name="Chertkov O."/>
            <person name="Sims D."/>
            <person name="Civerolo E.L."/>
        </authorList>
    </citation>
    <scope>NUCLEOTIDE SEQUENCE [LARGE SCALE GENOMIC DNA]</scope>
    <source>
        <strain>M12</strain>
    </source>
</reference>
<feature type="chain" id="PRO_0000357119" description="Methylthioribulose-1-phosphate dehydratase">
    <location>
        <begin position="1"/>
        <end position="218"/>
    </location>
</feature>
<feature type="binding site" evidence="1">
    <location>
        <position position="107"/>
    </location>
    <ligand>
        <name>Zn(2+)</name>
        <dbReference type="ChEBI" id="CHEBI:29105"/>
    </ligand>
</feature>
<feature type="binding site" evidence="1">
    <location>
        <position position="109"/>
    </location>
    <ligand>
        <name>Zn(2+)</name>
        <dbReference type="ChEBI" id="CHEBI:29105"/>
    </ligand>
</feature>
<gene>
    <name evidence="1" type="primary">mtnB</name>
    <name type="ordered locus">Xfasm12_1410</name>
</gene>
<organism>
    <name type="scientific">Xylella fastidiosa (strain M12)</name>
    <dbReference type="NCBI Taxonomy" id="405440"/>
    <lineage>
        <taxon>Bacteria</taxon>
        <taxon>Pseudomonadati</taxon>
        <taxon>Pseudomonadota</taxon>
        <taxon>Gammaproteobacteria</taxon>
        <taxon>Lysobacterales</taxon>
        <taxon>Lysobacteraceae</taxon>
        <taxon>Xylella</taxon>
    </lineage>
</organism>
<name>MTNB_XYLFM</name>
<evidence type="ECO:0000255" key="1">
    <source>
        <dbReference type="HAMAP-Rule" id="MF_01677"/>
    </source>
</evidence>
<keyword id="KW-0028">Amino-acid biosynthesis</keyword>
<keyword id="KW-0456">Lyase</keyword>
<keyword id="KW-0479">Metal-binding</keyword>
<keyword id="KW-0486">Methionine biosynthesis</keyword>
<keyword id="KW-0862">Zinc</keyword>
<protein>
    <recommendedName>
        <fullName evidence="1">Methylthioribulose-1-phosphate dehydratase</fullName>
        <shortName evidence="1">MTRu-1-P dehydratase</shortName>
        <ecNumber evidence="1">4.2.1.109</ecNumber>
    </recommendedName>
</protein>
<dbReference type="EC" id="4.2.1.109" evidence="1"/>
<dbReference type="EMBL" id="CP000941">
    <property type="protein sequence ID" value="ACA12333.1"/>
    <property type="molecule type" value="Genomic_DNA"/>
</dbReference>
<dbReference type="RefSeq" id="WP_012337943.1">
    <property type="nucleotide sequence ID" value="NC_010513.1"/>
</dbReference>
<dbReference type="SMR" id="B0U3A4"/>
<dbReference type="KEGG" id="xfm:Xfasm12_1410"/>
<dbReference type="HOGENOM" id="CLU_006033_4_1_6"/>
<dbReference type="UniPathway" id="UPA00904">
    <property type="reaction ID" value="UER00875"/>
</dbReference>
<dbReference type="GO" id="GO:0005737">
    <property type="term" value="C:cytoplasm"/>
    <property type="evidence" value="ECO:0007669"/>
    <property type="project" value="InterPro"/>
</dbReference>
<dbReference type="GO" id="GO:0046570">
    <property type="term" value="F:methylthioribulose 1-phosphate dehydratase activity"/>
    <property type="evidence" value="ECO:0007669"/>
    <property type="project" value="UniProtKB-UniRule"/>
</dbReference>
<dbReference type="GO" id="GO:0008270">
    <property type="term" value="F:zinc ion binding"/>
    <property type="evidence" value="ECO:0007669"/>
    <property type="project" value="UniProtKB-UniRule"/>
</dbReference>
<dbReference type="GO" id="GO:0019509">
    <property type="term" value="P:L-methionine salvage from methylthioadenosine"/>
    <property type="evidence" value="ECO:0007669"/>
    <property type="project" value="UniProtKB-UniRule"/>
</dbReference>
<dbReference type="GO" id="GO:0005996">
    <property type="term" value="P:monosaccharide metabolic process"/>
    <property type="evidence" value="ECO:0007669"/>
    <property type="project" value="UniProtKB-ARBA"/>
</dbReference>
<dbReference type="Gene3D" id="3.40.225.10">
    <property type="entry name" value="Class II aldolase/adducin N-terminal domain"/>
    <property type="match status" value="1"/>
</dbReference>
<dbReference type="HAMAP" id="MF_01677">
    <property type="entry name" value="Salvage_MtnB"/>
    <property type="match status" value="1"/>
</dbReference>
<dbReference type="InterPro" id="IPR001303">
    <property type="entry name" value="Aldolase_II/adducin_N"/>
</dbReference>
<dbReference type="InterPro" id="IPR036409">
    <property type="entry name" value="Aldolase_II/adducin_N_sf"/>
</dbReference>
<dbReference type="InterPro" id="IPR017714">
    <property type="entry name" value="MethylthioRu-1-P_deHdtase_MtnB"/>
</dbReference>
<dbReference type="NCBIfam" id="NF006672">
    <property type="entry name" value="PRK09220.1"/>
    <property type="match status" value="1"/>
</dbReference>
<dbReference type="NCBIfam" id="TIGR03328">
    <property type="entry name" value="salvage_mtnB"/>
    <property type="match status" value="1"/>
</dbReference>
<dbReference type="PANTHER" id="PTHR10640">
    <property type="entry name" value="METHYLTHIORIBULOSE-1-PHOSPHATE DEHYDRATASE"/>
    <property type="match status" value="1"/>
</dbReference>
<dbReference type="PANTHER" id="PTHR10640:SF7">
    <property type="entry name" value="METHYLTHIORIBULOSE-1-PHOSPHATE DEHYDRATASE"/>
    <property type="match status" value="1"/>
</dbReference>
<dbReference type="Pfam" id="PF00596">
    <property type="entry name" value="Aldolase_II"/>
    <property type="match status" value="1"/>
</dbReference>
<dbReference type="SMART" id="SM01007">
    <property type="entry name" value="Aldolase_II"/>
    <property type="match status" value="1"/>
</dbReference>
<dbReference type="SUPFAM" id="SSF53639">
    <property type="entry name" value="AraD/HMP-PK domain-like"/>
    <property type="match status" value="1"/>
</dbReference>
<accession>B0U3A4</accession>